<feature type="chain" id="PRO_1000066676" description="Acyl carrier protein">
    <location>
        <begin position="1"/>
        <end position="79"/>
    </location>
</feature>
<feature type="domain" description="Carrier" evidence="2">
    <location>
        <begin position="2"/>
        <end position="77"/>
    </location>
</feature>
<feature type="modified residue" description="O-(pantetheine 4'-phosphoryl)serine" evidence="2">
    <location>
        <position position="37"/>
    </location>
</feature>
<keyword id="KW-0963">Cytoplasm</keyword>
<keyword id="KW-0275">Fatty acid biosynthesis</keyword>
<keyword id="KW-0276">Fatty acid metabolism</keyword>
<keyword id="KW-0444">Lipid biosynthesis</keyword>
<keyword id="KW-0443">Lipid metabolism</keyword>
<keyword id="KW-0596">Phosphopantetheine</keyword>
<keyword id="KW-0597">Phosphoprotein</keyword>
<dbReference type="EMBL" id="CP000283">
    <property type="protein sequence ID" value="ABE40204.1"/>
    <property type="molecule type" value="Genomic_DNA"/>
</dbReference>
<dbReference type="SMR" id="Q135N5"/>
<dbReference type="STRING" id="316057.RPD_2978"/>
<dbReference type="KEGG" id="rpd:RPD_2978"/>
<dbReference type="eggNOG" id="COG0236">
    <property type="taxonomic scope" value="Bacteria"/>
</dbReference>
<dbReference type="HOGENOM" id="CLU_108696_5_1_5"/>
<dbReference type="BioCyc" id="RPAL316057:RPD_RS14960-MONOMER"/>
<dbReference type="UniPathway" id="UPA00094"/>
<dbReference type="Proteomes" id="UP000001818">
    <property type="component" value="Chromosome"/>
</dbReference>
<dbReference type="GO" id="GO:0005829">
    <property type="term" value="C:cytosol"/>
    <property type="evidence" value="ECO:0007669"/>
    <property type="project" value="TreeGrafter"/>
</dbReference>
<dbReference type="GO" id="GO:0016020">
    <property type="term" value="C:membrane"/>
    <property type="evidence" value="ECO:0007669"/>
    <property type="project" value="GOC"/>
</dbReference>
<dbReference type="GO" id="GO:0000035">
    <property type="term" value="F:acyl binding"/>
    <property type="evidence" value="ECO:0007669"/>
    <property type="project" value="TreeGrafter"/>
</dbReference>
<dbReference type="GO" id="GO:0000036">
    <property type="term" value="F:acyl carrier activity"/>
    <property type="evidence" value="ECO:0007669"/>
    <property type="project" value="UniProtKB-UniRule"/>
</dbReference>
<dbReference type="GO" id="GO:0031177">
    <property type="term" value="F:phosphopantetheine binding"/>
    <property type="evidence" value="ECO:0007669"/>
    <property type="project" value="InterPro"/>
</dbReference>
<dbReference type="GO" id="GO:0009245">
    <property type="term" value="P:lipid A biosynthetic process"/>
    <property type="evidence" value="ECO:0007669"/>
    <property type="project" value="TreeGrafter"/>
</dbReference>
<dbReference type="FunFam" id="1.10.1200.10:FF:000012">
    <property type="entry name" value="Acyl carrier protein"/>
    <property type="match status" value="1"/>
</dbReference>
<dbReference type="Gene3D" id="1.10.1200.10">
    <property type="entry name" value="ACP-like"/>
    <property type="match status" value="1"/>
</dbReference>
<dbReference type="HAMAP" id="MF_01217">
    <property type="entry name" value="Acyl_carrier"/>
    <property type="match status" value="1"/>
</dbReference>
<dbReference type="InterPro" id="IPR003231">
    <property type="entry name" value="ACP"/>
</dbReference>
<dbReference type="InterPro" id="IPR036736">
    <property type="entry name" value="ACP-like_sf"/>
</dbReference>
<dbReference type="InterPro" id="IPR020806">
    <property type="entry name" value="PKS_PP-bd"/>
</dbReference>
<dbReference type="InterPro" id="IPR009081">
    <property type="entry name" value="PP-bd_ACP"/>
</dbReference>
<dbReference type="InterPro" id="IPR006162">
    <property type="entry name" value="Ppantetheine_attach_site"/>
</dbReference>
<dbReference type="NCBIfam" id="TIGR00517">
    <property type="entry name" value="acyl_carrier"/>
    <property type="match status" value="1"/>
</dbReference>
<dbReference type="NCBIfam" id="NF002148">
    <property type="entry name" value="PRK00982.1-2"/>
    <property type="match status" value="1"/>
</dbReference>
<dbReference type="NCBIfam" id="NF002149">
    <property type="entry name" value="PRK00982.1-3"/>
    <property type="match status" value="1"/>
</dbReference>
<dbReference type="NCBIfam" id="NF002150">
    <property type="entry name" value="PRK00982.1-4"/>
    <property type="match status" value="1"/>
</dbReference>
<dbReference type="NCBIfam" id="NF002151">
    <property type="entry name" value="PRK00982.1-5"/>
    <property type="match status" value="1"/>
</dbReference>
<dbReference type="PANTHER" id="PTHR20863">
    <property type="entry name" value="ACYL CARRIER PROTEIN"/>
    <property type="match status" value="1"/>
</dbReference>
<dbReference type="PANTHER" id="PTHR20863:SF76">
    <property type="entry name" value="CARRIER DOMAIN-CONTAINING PROTEIN"/>
    <property type="match status" value="1"/>
</dbReference>
<dbReference type="Pfam" id="PF00550">
    <property type="entry name" value="PP-binding"/>
    <property type="match status" value="1"/>
</dbReference>
<dbReference type="SMART" id="SM00823">
    <property type="entry name" value="PKS_PP"/>
    <property type="match status" value="1"/>
</dbReference>
<dbReference type="SUPFAM" id="SSF47336">
    <property type="entry name" value="ACP-like"/>
    <property type="match status" value="1"/>
</dbReference>
<dbReference type="PROSITE" id="PS50075">
    <property type="entry name" value="CARRIER"/>
    <property type="match status" value="1"/>
</dbReference>
<dbReference type="PROSITE" id="PS00012">
    <property type="entry name" value="PHOSPHOPANTETHEINE"/>
    <property type="match status" value="1"/>
</dbReference>
<sequence length="79" mass="8573">MSEIGERVKKIVVEHLGVEPEKVVDSASFIDDLGADSLDTVELVMAFEEEFGCEIPDDAAETILTVGDATKFLEKNAKS</sequence>
<gene>
    <name evidence="1" type="primary">acpP</name>
    <name type="ordered locus">RPD_2978</name>
</gene>
<protein>
    <recommendedName>
        <fullName evidence="1">Acyl carrier protein</fullName>
        <shortName evidence="1">ACP</shortName>
    </recommendedName>
</protein>
<reference key="1">
    <citation type="submission" date="2006-03" db="EMBL/GenBank/DDBJ databases">
        <title>Complete sequence of Rhodopseudomonas palustris BisB5.</title>
        <authorList>
            <consortium name="US DOE Joint Genome Institute"/>
            <person name="Copeland A."/>
            <person name="Lucas S."/>
            <person name="Lapidus A."/>
            <person name="Barry K."/>
            <person name="Detter J.C."/>
            <person name="Glavina del Rio T."/>
            <person name="Hammon N."/>
            <person name="Israni S."/>
            <person name="Dalin E."/>
            <person name="Tice H."/>
            <person name="Pitluck S."/>
            <person name="Chain P."/>
            <person name="Malfatti S."/>
            <person name="Shin M."/>
            <person name="Vergez L."/>
            <person name="Schmutz J."/>
            <person name="Larimer F."/>
            <person name="Land M."/>
            <person name="Hauser L."/>
            <person name="Pelletier D.A."/>
            <person name="Kyrpides N."/>
            <person name="Lykidis A."/>
            <person name="Oda Y."/>
            <person name="Harwood C.S."/>
            <person name="Richardson P."/>
        </authorList>
    </citation>
    <scope>NUCLEOTIDE SEQUENCE [LARGE SCALE GENOMIC DNA]</scope>
    <source>
        <strain>BisB5</strain>
    </source>
</reference>
<proteinExistence type="inferred from homology"/>
<organism>
    <name type="scientific">Rhodopseudomonas palustris (strain BisB5)</name>
    <dbReference type="NCBI Taxonomy" id="316057"/>
    <lineage>
        <taxon>Bacteria</taxon>
        <taxon>Pseudomonadati</taxon>
        <taxon>Pseudomonadota</taxon>
        <taxon>Alphaproteobacteria</taxon>
        <taxon>Hyphomicrobiales</taxon>
        <taxon>Nitrobacteraceae</taxon>
        <taxon>Rhodopseudomonas</taxon>
    </lineage>
</organism>
<comment type="function">
    <text evidence="1">Carrier of the growing fatty acid chain in fatty acid biosynthesis.</text>
</comment>
<comment type="pathway">
    <text evidence="1">Lipid metabolism; fatty acid biosynthesis.</text>
</comment>
<comment type="subcellular location">
    <subcellularLocation>
        <location evidence="1">Cytoplasm</location>
    </subcellularLocation>
</comment>
<comment type="PTM">
    <text evidence="1">4'-phosphopantetheine is transferred from CoA to a specific serine of apo-ACP by AcpS. This modification is essential for activity because fatty acids are bound in thioester linkage to the sulfhydryl of the prosthetic group.</text>
</comment>
<comment type="similarity">
    <text evidence="1">Belongs to the acyl carrier protein (ACP) family.</text>
</comment>
<evidence type="ECO:0000255" key="1">
    <source>
        <dbReference type="HAMAP-Rule" id="MF_01217"/>
    </source>
</evidence>
<evidence type="ECO:0000255" key="2">
    <source>
        <dbReference type="PROSITE-ProRule" id="PRU00258"/>
    </source>
</evidence>
<name>ACP_RHOPS</name>
<accession>Q135N5</accession>